<gene>
    <name evidence="1" type="primary">znuC</name>
    <name type="ordered locus">ECP_1802</name>
</gene>
<organism>
    <name type="scientific">Escherichia coli O6:K15:H31 (strain 536 / UPEC)</name>
    <dbReference type="NCBI Taxonomy" id="362663"/>
    <lineage>
        <taxon>Bacteria</taxon>
        <taxon>Pseudomonadati</taxon>
        <taxon>Pseudomonadota</taxon>
        <taxon>Gammaproteobacteria</taxon>
        <taxon>Enterobacterales</taxon>
        <taxon>Enterobacteriaceae</taxon>
        <taxon>Escherichia</taxon>
    </lineage>
</organism>
<proteinExistence type="inferred from homology"/>
<reference key="1">
    <citation type="journal article" date="2006" name="Mol. Microbiol.">
        <title>Role of pathogenicity island-associated integrases in the genome plasticity of uropathogenic Escherichia coli strain 536.</title>
        <authorList>
            <person name="Hochhut B."/>
            <person name="Wilde C."/>
            <person name="Balling G."/>
            <person name="Middendorf B."/>
            <person name="Dobrindt U."/>
            <person name="Brzuszkiewicz E."/>
            <person name="Gottschalk G."/>
            <person name="Carniel E."/>
            <person name="Hacker J."/>
        </authorList>
    </citation>
    <scope>NUCLEOTIDE SEQUENCE [LARGE SCALE GENOMIC DNA]</scope>
    <source>
        <strain>536 / UPEC</strain>
    </source>
</reference>
<sequence>MTSLVSLENVSVSFGQRRVLSDVSLELKPGKILTLLGPNGAGKSTLVRVVLGLVTPDEGVIKRNGKLRIGYVPQKLYLDTTLPLTVNRFLRLRPGTHKEDILPALKRVQAGHLINAPMQKLSGGETQRVLLARALLNRPQLLVLDEPTQGVDVNGQVALYDLIDQLRRELDCGVLMVSHDLHLVMAKTDEVLCLNHHICCSGTPEVVSLHPEFISMFGPRGAEQLGIYRHHHNHRHDLQGRIVLRRGNDRS</sequence>
<feature type="chain" id="PRO_0000281507" description="Zinc import ATP-binding protein ZnuC">
    <location>
        <begin position="1"/>
        <end position="251"/>
    </location>
</feature>
<feature type="domain" description="ABC transporter" evidence="1">
    <location>
        <begin position="5"/>
        <end position="220"/>
    </location>
</feature>
<feature type="binding site" evidence="1">
    <location>
        <begin position="37"/>
        <end position="44"/>
    </location>
    <ligand>
        <name>ATP</name>
        <dbReference type="ChEBI" id="CHEBI:30616"/>
    </ligand>
</feature>
<protein>
    <recommendedName>
        <fullName evidence="1">Zinc import ATP-binding protein ZnuC</fullName>
        <ecNumber evidence="1">7.2.2.20</ecNumber>
    </recommendedName>
</protein>
<keyword id="KW-0067">ATP-binding</keyword>
<keyword id="KW-0997">Cell inner membrane</keyword>
<keyword id="KW-1003">Cell membrane</keyword>
<keyword id="KW-0406">Ion transport</keyword>
<keyword id="KW-0472">Membrane</keyword>
<keyword id="KW-0547">Nucleotide-binding</keyword>
<keyword id="KW-1278">Translocase</keyword>
<keyword id="KW-0813">Transport</keyword>
<keyword id="KW-0862">Zinc</keyword>
<keyword id="KW-0864">Zinc transport</keyword>
<dbReference type="EC" id="7.2.2.20" evidence="1"/>
<dbReference type="EMBL" id="CP000247">
    <property type="protein sequence ID" value="ABG69805.1"/>
    <property type="molecule type" value="Genomic_DNA"/>
</dbReference>
<dbReference type="RefSeq" id="WP_000202996.1">
    <property type="nucleotide sequence ID" value="NC_008253.1"/>
</dbReference>
<dbReference type="SMR" id="Q0TGX4"/>
<dbReference type="GeneID" id="93776132"/>
<dbReference type="KEGG" id="ecp:ECP_1802"/>
<dbReference type="HOGENOM" id="CLU_000604_1_11_6"/>
<dbReference type="Proteomes" id="UP000009182">
    <property type="component" value="Chromosome"/>
</dbReference>
<dbReference type="GO" id="GO:0005886">
    <property type="term" value="C:plasma membrane"/>
    <property type="evidence" value="ECO:0007669"/>
    <property type="project" value="UniProtKB-SubCell"/>
</dbReference>
<dbReference type="GO" id="GO:0015633">
    <property type="term" value="F:ABC-type zinc transporter activity"/>
    <property type="evidence" value="ECO:0007669"/>
    <property type="project" value="UniProtKB-EC"/>
</dbReference>
<dbReference type="GO" id="GO:0005524">
    <property type="term" value="F:ATP binding"/>
    <property type="evidence" value="ECO:0007669"/>
    <property type="project" value="UniProtKB-KW"/>
</dbReference>
<dbReference type="GO" id="GO:0016887">
    <property type="term" value="F:ATP hydrolysis activity"/>
    <property type="evidence" value="ECO:0007669"/>
    <property type="project" value="InterPro"/>
</dbReference>
<dbReference type="GO" id="GO:0010043">
    <property type="term" value="P:response to zinc ion"/>
    <property type="evidence" value="ECO:0007669"/>
    <property type="project" value="TreeGrafter"/>
</dbReference>
<dbReference type="CDD" id="cd03235">
    <property type="entry name" value="ABC_Metallic_Cations"/>
    <property type="match status" value="1"/>
</dbReference>
<dbReference type="FunFam" id="3.40.50.300:FF:000392">
    <property type="entry name" value="Zinc import ATP-binding protein ZnuC"/>
    <property type="match status" value="1"/>
</dbReference>
<dbReference type="Gene3D" id="3.40.50.300">
    <property type="entry name" value="P-loop containing nucleotide triphosphate hydrolases"/>
    <property type="match status" value="1"/>
</dbReference>
<dbReference type="InterPro" id="IPR003593">
    <property type="entry name" value="AAA+_ATPase"/>
</dbReference>
<dbReference type="InterPro" id="IPR003439">
    <property type="entry name" value="ABC_transporter-like_ATP-bd"/>
</dbReference>
<dbReference type="InterPro" id="IPR050153">
    <property type="entry name" value="Metal_Ion_Import_ABC"/>
</dbReference>
<dbReference type="InterPro" id="IPR027417">
    <property type="entry name" value="P-loop_NTPase"/>
</dbReference>
<dbReference type="NCBIfam" id="NF007090">
    <property type="entry name" value="PRK09544.1"/>
    <property type="match status" value="1"/>
</dbReference>
<dbReference type="PANTHER" id="PTHR42734">
    <property type="entry name" value="METAL TRANSPORT SYSTEM ATP-BINDING PROTEIN TM_0124-RELATED"/>
    <property type="match status" value="1"/>
</dbReference>
<dbReference type="PANTHER" id="PTHR42734:SF9">
    <property type="entry name" value="ZINC IMPORT ATP-BINDING PROTEIN ZNUC"/>
    <property type="match status" value="1"/>
</dbReference>
<dbReference type="Pfam" id="PF00005">
    <property type="entry name" value="ABC_tran"/>
    <property type="match status" value="1"/>
</dbReference>
<dbReference type="SMART" id="SM00382">
    <property type="entry name" value="AAA"/>
    <property type="match status" value="1"/>
</dbReference>
<dbReference type="SUPFAM" id="SSF52540">
    <property type="entry name" value="P-loop containing nucleoside triphosphate hydrolases"/>
    <property type="match status" value="1"/>
</dbReference>
<dbReference type="PROSITE" id="PS50893">
    <property type="entry name" value="ABC_TRANSPORTER_2"/>
    <property type="match status" value="1"/>
</dbReference>
<dbReference type="PROSITE" id="PS51298">
    <property type="entry name" value="ZNUC"/>
    <property type="match status" value="1"/>
</dbReference>
<comment type="function">
    <text evidence="1">Part of the ABC transporter complex ZnuABC involved in zinc import. Responsible for energy coupling to the transport system.</text>
</comment>
<comment type="catalytic activity">
    <reaction evidence="1">
        <text>Zn(2+)(out) + ATP(in) + H2O(in) = Zn(2+)(in) + ADP(in) + phosphate(in) + H(+)(in)</text>
        <dbReference type="Rhea" id="RHEA:29795"/>
        <dbReference type="ChEBI" id="CHEBI:15377"/>
        <dbReference type="ChEBI" id="CHEBI:15378"/>
        <dbReference type="ChEBI" id="CHEBI:29105"/>
        <dbReference type="ChEBI" id="CHEBI:30616"/>
        <dbReference type="ChEBI" id="CHEBI:43474"/>
        <dbReference type="ChEBI" id="CHEBI:456216"/>
        <dbReference type="EC" id="7.2.2.20"/>
    </reaction>
</comment>
<comment type="subunit">
    <text evidence="1">The complex is composed of two ATP-binding proteins (ZnuC), two transmembrane proteins (ZnuB) and a solute-binding protein (ZnuA).</text>
</comment>
<comment type="subcellular location">
    <subcellularLocation>
        <location evidence="1">Cell inner membrane</location>
        <topology evidence="1">Peripheral membrane protein</topology>
    </subcellularLocation>
</comment>
<comment type="similarity">
    <text evidence="1">Belongs to the ABC transporter superfamily. Zinc importer (TC 3.A.1.15.5) family.</text>
</comment>
<name>ZNUC_ECOL5</name>
<accession>Q0TGX4</accession>
<evidence type="ECO:0000255" key="1">
    <source>
        <dbReference type="HAMAP-Rule" id="MF_01725"/>
    </source>
</evidence>